<dbReference type="EC" id="2.4.2.29" evidence="1"/>
<dbReference type="EMBL" id="CP001048">
    <property type="protein sequence ID" value="ACC87950.1"/>
    <property type="molecule type" value="Genomic_DNA"/>
</dbReference>
<dbReference type="RefSeq" id="WP_002208672.1">
    <property type="nucleotide sequence ID" value="NZ_CP009780.1"/>
</dbReference>
<dbReference type="SMR" id="B2K6S6"/>
<dbReference type="GeneID" id="57975522"/>
<dbReference type="KEGG" id="ypb:YPTS_0969"/>
<dbReference type="PATRIC" id="fig|502801.10.peg.310"/>
<dbReference type="UniPathway" id="UPA00392"/>
<dbReference type="GO" id="GO:0005829">
    <property type="term" value="C:cytosol"/>
    <property type="evidence" value="ECO:0007669"/>
    <property type="project" value="TreeGrafter"/>
</dbReference>
<dbReference type="GO" id="GO:0046872">
    <property type="term" value="F:metal ion binding"/>
    <property type="evidence" value="ECO:0007669"/>
    <property type="project" value="UniProtKB-KW"/>
</dbReference>
<dbReference type="GO" id="GO:0008479">
    <property type="term" value="F:tRNA-guanosine(34) queuine transglycosylase activity"/>
    <property type="evidence" value="ECO:0007669"/>
    <property type="project" value="UniProtKB-UniRule"/>
</dbReference>
<dbReference type="GO" id="GO:0008616">
    <property type="term" value="P:queuosine biosynthetic process"/>
    <property type="evidence" value="ECO:0007669"/>
    <property type="project" value="UniProtKB-UniRule"/>
</dbReference>
<dbReference type="GO" id="GO:0002099">
    <property type="term" value="P:tRNA wobble guanine modification"/>
    <property type="evidence" value="ECO:0007669"/>
    <property type="project" value="TreeGrafter"/>
</dbReference>
<dbReference type="GO" id="GO:0101030">
    <property type="term" value="P:tRNA-guanine transglycosylation"/>
    <property type="evidence" value="ECO:0007669"/>
    <property type="project" value="InterPro"/>
</dbReference>
<dbReference type="FunFam" id="3.20.20.105:FF:000001">
    <property type="entry name" value="Queuine tRNA-ribosyltransferase"/>
    <property type="match status" value="1"/>
</dbReference>
<dbReference type="Gene3D" id="3.20.20.105">
    <property type="entry name" value="Queuine tRNA-ribosyltransferase-like"/>
    <property type="match status" value="1"/>
</dbReference>
<dbReference type="HAMAP" id="MF_00168">
    <property type="entry name" value="Q_tRNA_Tgt"/>
    <property type="match status" value="1"/>
</dbReference>
<dbReference type="InterPro" id="IPR050076">
    <property type="entry name" value="ArchSynthase1/Queuine_TRR"/>
</dbReference>
<dbReference type="InterPro" id="IPR004803">
    <property type="entry name" value="TGT"/>
</dbReference>
<dbReference type="InterPro" id="IPR036511">
    <property type="entry name" value="TGT-like_sf"/>
</dbReference>
<dbReference type="InterPro" id="IPR002616">
    <property type="entry name" value="tRNA_ribo_trans-like"/>
</dbReference>
<dbReference type="NCBIfam" id="TIGR00430">
    <property type="entry name" value="Q_tRNA_tgt"/>
    <property type="match status" value="1"/>
</dbReference>
<dbReference type="NCBIfam" id="TIGR00449">
    <property type="entry name" value="tgt_general"/>
    <property type="match status" value="1"/>
</dbReference>
<dbReference type="PANTHER" id="PTHR46499">
    <property type="entry name" value="QUEUINE TRNA-RIBOSYLTRANSFERASE"/>
    <property type="match status" value="1"/>
</dbReference>
<dbReference type="PANTHER" id="PTHR46499:SF1">
    <property type="entry name" value="QUEUINE TRNA-RIBOSYLTRANSFERASE"/>
    <property type="match status" value="1"/>
</dbReference>
<dbReference type="Pfam" id="PF01702">
    <property type="entry name" value="TGT"/>
    <property type="match status" value="1"/>
</dbReference>
<dbReference type="SUPFAM" id="SSF51713">
    <property type="entry name" value="tRNA-guanine transglycosylase"/>
    <property type="match status" value="1"/>
</dbReference>
<comment type="function">
    <text evidence="1">Catalyzes the base-exchange of a guanine (G) residue with the queuine precursor 7-aminomethyl-7-deazaguanine (PreQ1) at position 34 (anticodon wobble position) in tRNAs with GU(N) anticodons (tRNA-Asp, -Asn, -His and -Tyr). Catalysis occurs through a double-displacement mechanism. The nucleophile active site attacks the C1' of nucleotide 34 to detach the guanine base from the RNA, forming a covalent enzyme-RNA intermediate. The proton acceptor active site deprotonates the incoming PreQ1, allowing a nucleophilic attack on the C1' of the ribose to form the product. After dissociation, two additional enzymatic reactions on the tRNA convert PreQ1 to queuine (Q), resulting in the hypermodified nucleoside queuosine (7-(((4,5-cis-dihydroxy-2-cyclopenten-1-yl)amino)methyl)-7-deazaguanosine).</text>
</comment>
<comment type="catalytic activity">
    <reaction evidence="1">
        <text>7-aminomethyl-7-carbaguanine + guanosine(34) in tRNA = 7-aminomethyl-7-carbaguanosine(34) in tRNA + guanine</text>
        <dbReference type="Rhea" id="RHEA:24104"/>
        <dbReference type="Rhea" id="RHEA-COMP:10341"/>
        <dbReference type="Rhea" id="RHEA-COMP:10342"/>
        <dbReference type="ChEBI" id="CHEBI:16235"/>
        <dbReference type="ChEBI" id="CHEBI:58703"/>
        <dbReference type="ChEBI" id="CHEBI:74269"/>
        <dbReference type="ChEBI" id="CHEBI:82833"/>
        <dbReference type="EC" id="2.4.2.29"/>
    </reaction>
</comment>
<comment type="cofactor">
    <cofactor evidence="1">
        <name>Zn(2+)</name>
        <dbReference type="ChEBI" id="CHEBI:29105"/>
    </cofactor>
    <text evidence="1">Binds 1 zinc ion per subunit.</text>
</comment>
<comment type="pathway">
    <text evidence="1">tRNA modification; tRNA-queuosine biosynthesis.</text>
</comment>
<comment type="subunit">
    <text evidence="1">Homodimer. Within each dimer, one monomer is responsible for RNA recognition and catalysis, while the other monomer binds to the replacement base PreQ1.</text>
</comment>
<comment type="similarity">
    <text evidence="1">Belongs to the queuine tRNA-ribosyltransferase family.</text>
</comment>
<protein>
    <recommendedName>
        <fullName evidence="1">Queuine tRNA-ribosyltransferase</fullName>
        <ecNumber evidence="1">2.4.2.29</ecNumber>
    </recommendedName>
    <alternativeName>
        <fullName evidence="1">Guanine insertion enzyme</fullName>
    </alternativeName>
    <alternativeName>
        <fullName evidence="1">tRNA-guanine transglycosylase</fullName>
    </alternativeName>
</protein>
<gene>
    <name evidence="1" type="primary">tgt</name>
    <name type="ordered locus">YPTS_0969</name>
</gene>
<accession>B2K6S6</accession>
<evidence type="ECO:0000255" key="1">
    <source>
        <dbReference type="HAMAP-Rule" id="MF_00168"/>
    </source>
</evidence>
<feature type="chain" id="PRO_1000097581" description="Queuine tRNA-ribosyltransferase">
    <location>
        <begin position="1"/>
        <end position="374"/>
    </location>
</feature>
<feature type="region of interest" description="RNA binding" evidence="1">
    <location>
        <begin position="245"/>
        <end position="251"/>
    </location>
</feature>
<feature type="region of interest" description="RNA binding; important for wobble base 34 recognition" evidence="1">
    <location>
        <begin position="269"/>
        <end position="273"/>
    </location>
</feature>
<feature type="active site" description="Proton acceptor" evidence="1">
    <location>
        <position position="89"/>
    </location>
</feature>
<feature type="active site" description="Nucleophile" evidence="1">
    <location>
        <position position="264"/>
    </location>
</feature>
<feature type="binding site" evidence="1">
    <location>
        <begin position="89"/>
        <end position="93"/>
    </location>
    <ligand>
        <name>substrate</name>
    </ligand>
</feature>
<feature type="binding site" evidence="1">
    <location>
        <position position="143"/>
    </location>
    <ligand>
        <name>substrate</name>
    </ligand>
</feature>
<feature type="binding site" evidence="1">
    <location>
        <position position="187"/>
    </location>
    <ligand>
        <name>substrate</name>
    </ligand>
</feature>
<feature type="binding site" evidence="1">
    <location>
        <position position="214"/>
    </location>
    <ligand>
        <name>substrate</name>
    </ligand>
</feature>
<feature type="binding site" evidence="1">
    <location>
        <position position="302"/>
    </location>
    <ligand>
        <name>Zn(2+)</name>
        <dbReference type="ChEBI" id="CHEBI:29105"/>
    </ligand>
</feature>
<feature type="binding site" evidence="1">
    <location>
        <position position="304"/>
    </location>
    <ligand>
        <name>Zn(2+)</name>
        <dbReference type="ChEBI" id="CHEBI:29105"/>
    </ligand>
</feature>
<feature type="binding site" evidence="1">
    <location>
        <position position="307"/>
    </location>
    <ligand>
        <name>Zn(2+)</name>
        <dbReference type="ChEBI" id="CHEBI:29105"/>
    </ligand>
</feature>
<feature type="binding site" evidence="1">
    <location>
        <position position="333"/>
    </location>
    <ligand>
        <name>Zn(2+)</name>
        <dbReference type="ChEBI" id="CHEBI:29105"/>
    </ligand>
</feature>
<name>TGT_YERPB</name>
<sequence>MKYELQKTDGRARRGRLVFERGVVETPAFMPVGTYGTVKGMTPEEVKETGAQILLGNTFHLWLRPGQEIMKLHGDLHDFMQWHGPILTDSGGFQVFSLGAMRKIKEEGVHFKNPINGDSVFLSPEKSMEIQYDLGSDIVMIFDECTPYPADWDYAKRSMEMSLRWAARSRQRFDELNNKNALFGIIQGGVYEDLRDVSVKGLVDIGFDGYAVGGLAVGEPKEDMHRILEHVCPQIPEDKPRYLMGVGKPEDLVEGVRRGIDMFDCVMPTRNARNGHLFVTDGVVKIRNAKHKDDTATLDEHCDCYTCRHYSRAYLHHLDRCNEILGARLNTIHNLRYYQRLMAGLRQAIEEGKLEHFVEDFYGRIGKPVPPLNV</sequence>
<organism>
    <name type="scientific">Yersinia pseudotuberculosis serotype IB (strain PB1/+)</name>
    <dbReference type="NCBI Taxonomy" id="502801"/>
    <lineage>
        <taxon>Bacteria</taxon>
        <taxon>Pseudomonadati</taxon>
        <taxon>Pseudomonadota</taxon>
        <taxon>Gammaproteobacteria</taxon>
        <taxon>Enterobacterales</taxon>
        <taxon>Yersiniaceae</taxon>
        <taxon>Yersinia</taxon>
    </lineage>
</organism>
<keyword id="KW-0328">Glycosyltransferase</keyword>
<keyword id="KW-0479">Metal-binding</keyword>
<keyword id="KW-0671">Queuosine biosynthesis</keyword>
<keyword id="KW-0808">Transferase</keyword>
<keyword id="KW-0819">tRNA processing</keyword>
<keyword id="KW-0862">Zinc</keyword>
<proteinExistence type="inferred from homology"/>
<reference key="1">
    <citation type="submission" date="2008-04" db="EMBL/GenBank/DDBJ databases">
        <title>Complete sequence of Yersinia pseudotuberculosis PB1/+.</title>
        <authorList>
            <person name="Copeland A."/>
            <person name="Lucas S."/>
            <person name="Lapidus A."/>
            <person name="Glavina del Rio T."/>
            <person name="Dalin E."/>
            <person name="Tice H."/>
            <person name="Bruce D."/>
            <person name="Goodwin L."/>
            <person name="Pitluck S."/>
            <person name="Munk A.C."/>
            <person name="Brettin T."/>
            <person name="Detter J.C."/>
            <person name="Han C."/>
            <person name="Tapia R."/>
            <person name="Schmutz J."/>
            <person name="Larimer F."/>
            <person name="Land M."/>
            <person name="Hauser L."/>
            <person name="Challacombe J.F."/>
            <person name="Green L."/>
            <person name="Lindler L.E."/>
            <person name="Nikolich M.P."/>
            <person name="Richardson P."/>
        </authorList>
    </citation>
    <scope>NUCLEOTIDE SEQUENCE [LARGE SCALE GENOMIC DNA]</scope>
    <source>
        <strain>PB1/+</strain>
    </source>
</reference>